<organism>
    <name type="scientific">Listeria monocytogenes serotype 4a (strain HCC23)</name>
    <dbReference type="NCBI Taxonomy" id="552536"/>
    <lineage>
        <taxon>Bacteria</taxon>
        <taxon>Bacillati</taxon>
        <taxon>Bacillota</taxon>
        <taxon>Bacilli</taxon>
        <taxon>Bacillales</taxon>
        <taxon>Listeriaceae</taxon>
        <taxon>Listeria</taxon>
    </lineage>
</organism>
<keyword id="KW-0067">ATP-binding</keyword>
<keyword id="KW-0436">Ligase</keyword>
<keyword id="KW-0547">Nucleotide-binding</keyword>
<keyword id="KW-0648">Protein biosynthesis</keyword>
<accession>B8DFG7</accession>
<protein>
    <recommendedName>
        <fullName evidence="1">Aspartyl/glutamyl-tRNA(Asn/Gln) amidotransferase subunit C</fullName>
        <shortName evidence="1">Asp/Glu-ADT subunit C</shortName>
        <ecNumber evidence="1">6.3.5.-</ecNumber>
    </recommendedName>
</protein>
<reference key="1">
    <citation type="journal article" date="2011" name="J. Bacteriol.">
        <title>Genome sequence of lineage III Listeria monocytogenes strain HCC23.</title>
        <authorList>
            <person name="Steele C.L."/>
            <person name="Donaldson J.R."/>
            <person name="Paul D."/>
            <person name="Banes M.M."/>
            <person name="Arick T."/>
            <person name="Bridges S.M."/>
            <person name="Lawrence M.L."/>
        </authorList>
    </citation>
    <scope>NUCLEOTIDE SEQUENCE [LARGE SCALE GENOMIC DNA]</scope>
    <source>
        <strain>HCC23</strain>
    </source>
</reference>
<sequence>MSNISKETVEKVANLAKLEVSETEATAFAGQLGKIIELVEQLNTLDTTNVEPTSHAIDVSNVLREDVATKGLDRKEVLKNAPDEQDGMFKVPTIMEQ</sequence>
<evidence type="ECO:0000255" key="1">
    <source>
        <dbReference type="HAMAP-Rule" id="MF_00122"/>
    </source>
</evidence>
<dbReference type="EC" id="6.3.5.-" evidence="1"/>
<dbReference type="EMBL" id="CP001175">
    <property type="protein sequence ID" value="ACK39160.1"/>
    <property type="molecule type" value="Genomic_DNA"/>
</dbReference>
<dbReference type="RefSeq" id="WP_003722233.1">
    <property type="nucleotide sequence ID" value="NC_011660.1"/>
</dbReference>
<dbReference type="SMR" id="B8DFG7"/>
<dbReference type="KEGG" id="lmh:LMHCC_0808"/>
<dbReference type="HOGENOM" id="CLU_105899_6_1_9"/>
<dbReference type="GO" id="GO:0050566">
    <property type="term" value="F:asparaginyl-tRNA synthase (glutamine-hydrolyzing) activity"/>
    <property type="evidence" value="ECO:0007669"/>
    <property type="project" value="RHEA"/>
</dbReference>
<dbReference type="GO" id="GO:0005524">
    <property type="term" value="F:ATP binding"/>
    <property type="evidence" value="ECO:0007669"/>
    <property type="project" value="UniProtKB-KW"/>
</dbReference>
<dbReference type="GO" id="GO:0050567">
    <property type="term" value="F:glutaminyl-tRNA synthase (glutamine-hydrolyzing) activity"/>
    <property type="evidence" value="ECO:0007669"/>
    <property type="project" value="UniProtKB-UniRule"/>
</dbReference>
<dbReference type="GO" id="GO:0070681">
    <property type="term" value="P:glutaminyl-tRNAGln biosynthesis via transamidation"/>
    <property type="evidence" value="ECO:0007669"/>
    <property type="project" value="TreeGrafter"/>
</dbReference>
<dbReference type="GO" id="GO:0006450">
    <property type="term" value="P:regulation of translational fidelity"/>
    <property type="evidence" value="ECO:0007669"/>
    <property type="project" value="InterPro"/>
</dbReference>
<dbReference type="GO" id="GO:0006412">
    <property type="term" value="P:translation"/>
    <property type="evidence" value="ECO:0007669"/>
    <property type="project" value="UniProtKB-UniRule"/>
</dbReference>
<dbReference type="Gene3D" id="1.10.20.60">
    <property type="entry name" value="Glu-tRNAGln amidotransferase C subunit, N-terminal domain"/>
    <property type="match status" value="1"/>
</dbReference>
<dbReference type="HAMAP" id="MF_00122">
    <property type="entry name" value="GatC"/>
    <property type="match status" value="1"/>
</dbReference>
<dbReference type="InterPro" id="IPR036113">
    <property type="entry name" value="Asp/Glu-ADT_sf_sub_c"/>
</dbReference>
<dbReference type="InterPro" id="IPR003837">
    <property type="entry name" value="GatC"/>
</dbReference>
<dbReference type="NCBIfam" id="TIGR00135">
    <property type="entry name" value="gatC"/>
    <property type="match status" value="1"/>
</dbReference>
<dbReference type="PANTHER" id="PTHR15004">
    <property type="entry name" value="GLUTAMYL-TRNA(GLN) AMIDOTRANSFERASE SUBUNIT C, MITOCHONDRIAL"/>
    <property type="match status" value="1"/>
</dbReference>
<dbReference type="PANTHER" id="PTHR15004:SF0">
    <property type="entry name" value="GLUTAMYL-TRNA(GLN) AMIDOTRANSFERASE SUBUNIT C, MITOCHONDRIAL"/>
    <property type="match status" value="1"/>
</dbReference>
<dbReference type="Pfam" id="PF02686">
    <property type="entry name" value="GatC"/>
    <property type="match status" value="1"/>
</dbReference>
<dbReference type="SUPFAM" id="SSF141000">
    <property type="entry name" value="Glu-tRNAGln amidotransferase C subunit"/>
    <property type="match status" value="1"/>
</dbReference>
<gene>
    <name evidence="1" type="primary">gatC</name>
    <name type="ordered locus">LMHCC_0808</name>
</gene>
<name>GATC_LISMH</name>
<feature type="chain" id="PRO_1000122570" description="Aspartyl/glutamyl-tRNA(Asn/Gln) amidotransferase subunit C">
    <location>
        <begin position="1"/>
        <end position="97"/>
    </location>
</feature>
<proteinExistence type="inferred from homology"/>
<comment type="function">
    <text evidence="1">Allows the formation of correctly charged Asn-tRNA(Asn) or Gln-tRNA(Gln) through the transamidation of misacylated Asp-tRNA(Asn) or Glu-tRNA(Gln) in organisms which lack either or both of asparaginyl-tRNA or glutaminyl-tRNA synthetases. The reaction takes place in the presence of glutamine and ATP through an activated phospho-Asp-tRNA(Asn) or phospho-Glu-tRNA(Gln).</text>
</comment>
<comment type="catalytic activity">
    <reaction evidence="1">
        <text>L-glutamyl-tRNA(Gln) + L-glutamine + ATP + H2O = L-glutaminyl-tRNA(Gln) + L-glutamate + ADP + phosphate + H(+)</text>
        <dbReference type="Rhea" id="RHEA:17521"/>
        <dbReference type="Rhea" id="RHEA-COMP:9681"/>
        <dbReference type="Rhea" id="RHEA-COMP:9684"/>
        <dbReference type="ChEBI" id="CHEBI:15377"/>
        <dbReference type="ChEBI" id="CHEBI:15378"/>
        <dbReference type="ChEBI" id="CHEBI:29985"/>
        <dbReference type="ChEBI" id="CHEBI:30616"/>
        <dbReference type="ChEBI" id="CHEBI:43474"/>
        <dbReference type="ChEBI" id="CHEBI:58359"/>
        <dbReference type="ChEBI" id="CHEBI:78520"/>
        <dbReference type="ChEBI" id="CHEBI:78521"/>
        <dbReference type="ChEBI" id="CHEBI:456216"/>
    </reaction>
</comment>
<comment type="catalytic activity">
    <reaction evidence="1">
        <text>L-aspartyl-tRNA(Asn) + L-glutamine + ATP + H2O = L-asparaginyl-tRNA(Asn) + L-glutamate + ADP + phosphate + 2 H(+)</text>
        <dbReference type="Rhea" id="RHEA:14513"/>
        <dbReference type="Rhea" id="RHEA-COMP:9674"/>
        <dbReference type="Rhea" id="RHEA-COMP:9677"/>
        <dbReference type="ChEBI" id="CHEBI:15377"/>
        <dbReference type="ChEBI" id="CHEBI:15378"/>
        <dbReference type="ChEBI" id="CHEBI:29985"/>
        <dbReference type="ChEBI" id="CHEBI:30616"/>
        <dbReference type="ChEBI" id="CHEBI:43474"/>
        <dbReference type="ChEBI" id="CHEBI:58359"/>
        <dbReference type="ChEBI" id="CHEBI:78515"/>
        <dbReference type="ChEBI" id="CHEBI:78516"/>
        <dbReference type="ChEBI" id="CHEBI:456216"/>
    </reaction>
</comment>
<comment type="subunit">
    <text evidence="1">Heterotrimer of A, B and C subunits.</text>
</comment>
<comment type="similarity">
    <text evidence="1">Belongs to the GatC family.</text>
</comment>